<protein>
    <recommendedName>
        <fullName>Probable endopeptidase p60</fullName>
        <ecNumber>3.4.-.-</ecNumber>
    </recommendedName>
    <alternativeName>
        <fullName>Invasion-associated protein p60</fullName>
    </alternativeName>
</protein>
<feature type="signal peptide" evidence="1">
    <location>
        <begin position="1"/>
        <end position="27"/>
    </location>
</feature>
<feature type="chain" id="PRO_0000019762" description="Probable endopeptidase p60">
    <location>
        <begin position="28"/>
        <end position="524"/>
    </location>
</feature>
<feature type="domain" description="LysM 1" evidence="3">
    <location>
        <begin position="28"/>
        <end position="71"/>
    </location>
</feature>
<feature type="domain" description="SH3b" evidence="2">
    <location>
        <begin position="78"/>
        <end position="142"/>
    </location>
</feature>
<feature type="domain" description="LysM 2" evidence="3">
    <location>
        <begin position="196"/>
        <end position="239"/>
    </location>
</feature>
<feature type="domain" description="LysM 3" evidence="3">
    <location>
        <begin position="314"/>
        <end position="357"/>
    </location>
</feature>
<feature type="domain" description="NlpC/P60" evidence="4">
    <location>
        <begin position="406"/>
        <end position="524"/>
    </location>
</feature>
<feature type="region of interest" description="Disordered" evidence="5">
    <location>
        <begin position="150"/>
        <end position="188"/>
    </location>
</feature>
<feature type="region of interest" description="Disordered" evidence="5">
    <location>
        <begin position="272"/>
        <end position="313"/>
    </location>
</feature>
<feature type="region of interest" description="Disordered" evidence="5">
    <location>
        <begin position="360"/>
        <end position="408"/>
    </location>
</feature>
<feature type="compositionally biased region" description="Low complexity" evidence="5">
    <location>
        <begin position="174"/>
        <end position="188"/>
    </location>
</feature>
<feature type="compositionally biased region" description="Low complexity" evidence="5">
    <location>
        <begin position="272"/>
        <end position="299"/>
    </location>
</feature>
<feature type="compositionally biased region" description="Low complexity" evidence="5">
    <location>
        <begin position="362"/>
        <end position="408"/>
    </location>
</feature>
<feature type="active site" description="Nucleophile" evidence="4">
    <location>
        <position position="436"/>
    </location>
</feature>
<feature type="active site" description="Proton acceptor" evidence="4">
    <location>
        <position position="486"/>
    </location>
</feature>
<feature type="active site" evidence="4">
    <location>
        <position position="498"/>
    </location>
</feature>
<reference key="1">
    <citation type="journal article" date="1992" name="Appl. Environ. Microbiol.">
        <title>The homologous and heterologous regions within the iap gene allow genus- and species-specific identification of Listeria spp. by polymerase chain reaction.</title>
        <authorList>
            <person name="Bubert A."/>
            <person name="Koehler S."/>
            <person name="Goebel W."/>
        </authorList>
    </citation>
    <scope>NUCLEOTIDE SEQUENCE [GENOMIC DNA]</scope>
</reference>
<reference key="2">
    <citation type="journal article" date="1992" name="J. Bacteriol.">
        <title>Structural and functional properties of the p60 proteins from different Listeria species.</title>
        <authorList>
            <person name="Bubert A."/>
            <person name="Kuhn M."/>
            <person name="Goebel W."/>
            <person name="Koehler S."/>
        </authorList>
    </citation>
    <scope>NUCLEOTIDE SEQUENCE [GENOMIC DNA]</scope>
    <scope>DISCUSSION OF SEQUENCE</scope>
</reference>
<evidence type="ECO:0000250" key="1"/>
<evidence type="ECO:0000255" key="2">
    <source>
        <dbReference type="PROSITE-ProRule" id="PRU01117"/>
    </source>
</evidence>
<evidence type="ECO:0000255" key="3">
    <source>
        <dbReference type="PROSITE-ProRule" id="PRU01118"/>
    </source>
</evidence>
<evidence type="ECO:0000255" key="4">
    <source>
        <dbReference type="PROSITE-ProRule" id="PRU01284"/>
    </source>
</evidence>
<evidence type="ECO:0000256" key="5">
    <source>
        <dbReference type="SAM" id="MobiDB-lite"/>
    </source>
</evidence>
<evidence type="ECO:0000305" key="6"/>
<name>P60_LISWE</name>
<comment type="function">
    <text>This major extracellular protein may be involved in the invasion of non-professional phagocytic cells by Listeria.</text>
</comment>
<comment type="domain">
    <text>LysM domains are thought to be involved in peptidoglycan binding.</text>
</comment>
<comment type="similarity">
    <text evidence="4 6">Belongs to the peptidase C40 family.</text>
</comment>
<organism>
    <name type="scientific">Listeria welshimeri</name>
    <dbReference type="NCBI Taxonomy" id="1643"/>
    <lineage>
        <taxon>Bacteria</taxon>
        <taxon>Bacillati</taxon>
        <taxon>Bacillota</taxon>
        <taxon>Bacilli</taxon>
        <taxon>Bacillales</taxon>
        <taxon>Listeriaceae</taxon>
        <taxon>Listeria</taxon>
    </lineage>
</organism>
<proteinExistence type="inferred from homology"/>
<keyword id="KW-0378">Hydrolase</keyword>
<keyword id="KW-0645">Protease</keyword>
<keyword id="KW-0677">Repeat</keyword>
<keyword id="KW-0732">Signal</keyword>
<keyword id="KW-0788">Thiol protease</keyword>
<sequence>MNMKKATIAATAGIAVTAFAAPTIASASTVVVEAGDTLWGIAQSKGTTVDALKKANNLTSDKIVPGQKLQVTEVASEKTEKSVSATWLNVRSGAGVDNSIVTSLKGGTKVTVEAAESNGWNKISYGEGKTGYVNGKYLGDAVTSAPVAKQEVKQETTKQTAPAAETKTEVKQSTPAPTAPKAAETKTAPVVDTNATTHTVKSGDTIWALSVKYGASVQDLMSWNNLSSSSIYVGQKIAVKQSAAKTAAPKAEVKTEAPAVEKETSTPVVKENTNTTVKKEVTTQTQTNTTKAPAQAAKPAPAPAPAPTVNTNASTYTVKSGDSLSKIANTFGTSVSKIKALNNLTSDNLQVGTVLKVKGTVPTTNTNNNSNTTAPTTNTSNNNTSSNTSTPSKNTNTNTNQGSSNSASASALIAEAQKHLGKAYSWGGNGPTTFDCSGFTSYVFAKSGISLPRTSGAQYASTSRISESQAKPGDLVFFDYGSGIAHVGIYVGNGQMINAQDNGVKYDNIHGSGWGKYLVGFGRV</sequence>
<dbReference type="EC" id="3.4.-.-"/>
<dbReference type="EMBL" id="M80354">
    <property type="protein sequence ID" value="AAA25287.1"/>
    <property type="molecule type" value="Genomic_DNA"/>
</dbReference>
<dbReference type="EMBL" id="M80348">
    <property type="protein sequence ID" value="AAA25281.1"/>
    <property type="status" value="ALT_SEQ"/>
    <property type="molecule type" value="Genomic_DNA"/>
</dbReference>
<dbReference type="SMR" id="Q01839"/>
<dbReference type="OMA" id="MNMKKAT"/>
<dbReference type="GO" id="GO:0008234">
    <property type="term" value="F:cysteine-type peptidase activity"/>
    <property type="evidence" value="ECO:0007669"/>
    <property type="project" value="UniProtKB-KW"/>
</dbReference>
<dbReference type="GO" id="GO:0006508">
    <property type="term" value="P:proteolysis"/>
    <property type="evidence" value="ECO:0007669"/>
    <property type="project" value="UniProtKB-KW"/>
</dbReference>
<dbReference type="CDD" id="cd00118">
    <property type="entry name" value="LysM"/>
    <property type="match status" value="3"/>
</dbReference>
<dbReference type="Gene3D" id="3.90.1720.10">
    <property type="entry name" value="endopeptidase domain like (from Nostoc punctiforme)"/>
    <property type="match status" value="1"/>
</dbReference>
<dbReference type="Gene3D" id="3.10.350.10">
    <property type="entry name" value="LysM domain"/>
    <property type="match status" value="3"/>
</dbReference>
<dbReference type="Gene3D" id="2.30.30.40">
    <property type="entry name" value="SH3 Domains"/>
    <property type="match status" value="1"/>
</dbReference>
<dbReference type="InterPro" id="IPR018392">
    <property type="entry name" value="LysM_dom"/>
</dbReference>
<dbReference type="InterPro" id="IPR036779">
    <property type="entry name" value="LysM_dom_sf"/>
</dbReference>
<dbReference type="InterPro" id="IPR000064">
    <property type="entry name" value="NLP_P60_dom"/>
</dbReference>
<dbReference type="InterPro" id="IPR038765">
    <property type="entry name" value="Papain-like_cys_pep_sf"/>
</dbReference>
<dbReference type="InterPro" id="IPR051202">
    <property type="entry name" value="Peptidase_C40"/>
</dbReference>
<dbReference type="InterPro" id="IPR003646">
    <property type="entry name" value="SH3-like_bac-type"/>
</dbReference>
<dbReference type="NCBIfam" id="NF010495">
    <property type="entry name" value="PRK13914.1"/>
    <property type="match status" value="1"/>
</dbReference>
<dbReference type="PANTHER" id="PTHR47053">
    <property type="entry name" value="MUREIN DD-ENDOPEPTIDASE MEPH-RELATED"/>
    <property type="match status" value="1"/>
</dbReference>
<dbReference type="PANTHER" id="PTHR47053:SF1">
    <property type="entry name" value="MUREIN DD-ENDOPEPTIDASE MEPH-RELATED"/>
    <property type="match status" value="1"/>
</dbReference>
<dbReference type="Pfam" id="PF01476">
    <property type="entry name" value="LysM"/>
    <property type="match status" value="3"/>
</dbReference>
<dbReference type="Pfam" id="PF00877">
    <property type="entry name" value="NLPC_P60"/>
    <property type="match status" value="1"/>
</dbReference>
<dbReference type="Pfam" id="PF08239">
    <property type="entry name" value="SH3_3"/>
    <property type="match status" value="1"/>
</dbReference>
<dbReference type="SMART" id="SM00257">
    <property type="entry name" value="LysM"/>
    <property type="match status" value="3"/>
</dbReference>
<dbReference type="SMART" id="SM00287">
    <property type="entry name" value="SH3b"/>
    <property type="match status" value="1"/>
</dbReference>
<dbReference type="SUPFAM" id="SSF54001">
    <property type="entry name" value="Cysteine proteinases"/>
    <property type="match status" value="1"/>
</dbReference>
<dbReference type="SUPFAM" id="SSF54106">
    <property type="entry name" value="LysM domain"/>
    <property type="match status" value="3"/>
</dbReference>
<dbReference type="PROSITE" id="PS51782">
    <property type="entry name" value="LYSM"/>
    <property type="match status" value="3"/>
</dbReference>
<dbReference type="PROSITE" id="PS51935">
    <property type="entry name" value="NLPC_P60"/>
    <property type="match status" value="1"/>
</dbReference>
<dbReference type="PROSITE" id="PS51781">
    <property type="entry name" value="SH3B"/>
    <property type="match status" value="1"/>
</dbReference>
<accession>Q01839</accession>
<gene>
    <name type="primary">iap</name>
</gene>